<organism>
    <name type="scientific">Brucella melitensis biotype 1 (strain ATCC 23456 / CCUG 17765 / NCTC 10094 / 16M)</name>
    <dbReference type="NCBI Taxonomy" id="224914"/>
    <lineage>
        <taxon>Bacteria</taxon>
        <taxon>Pseudomonadati</taxon>
        <taxon>Pseudomonadota</taxon>
        <taxon>Alphaproteobacteria</taxon>
        <taxon>Hyphomicrobiales</taxon>
        <taxon>Brucellaceae</taxon>
        <taxon>Brucella/Ochrobactrum group</taxon>
        <taxon>Brucella</taxon>
    </lineage>
</organism>
<dbReference type="EC" id="7.2.2.7" evidence="1"/>
<dbReference type="EMBL" id="AE008918">
    <property type="protein sequence ID" value="AAL53809.1"/>
    <property type="molecule type" value="Genomic_DNA"/>
</dbReference>
<dbReference type="PIR" id="AF3580">
    <property type="entry name" value="AF3580"/>
</dbReference>
<dbReference type="RefSeq" id="WP_004682020.1">
    <property type="nucleotide sequence ID" value="NZ_GG703779.1"/>
</dbReference>
<dbReference type="SMR" id="Q8YCG3"/>
<dbReference type="GeneID" id="29595967"/>
<dbReference type="KEGG" id="bme:BMEII0567"/>
<dbReference type="KEGG" id="bmel:DK63_2680"/>
<dbReference type="PATRIC" id="fig|224914.52.peg.2808"/>
<dbReference type="eggNOG" id="COG3842">
    <property type="taxonomic scope" value="Bacteria"/>
</dbReference>
<dbReference type="PhylomeDB" id="Q8YCG3"/>
<dbReference type="Proteomes" id="UP000000419">
    <property type="component" value="Chromosome II"/>
</dbReference>
<dbReference type="GO" id="GO:0043190">
    <property type="term" value="C:ATP-binding cassette (ABC) transporter complex"/>
    <property type="evidence" value="ECO:0007669"/>
    <property type="project" value="InterPro"/>
</dbReference>
<dbReference type="GO" id="GO:0015408">
    <property type="term" value="F:ABC-type ferric iron transporter activity"/>
    <property type="evidence" value="ECO:0007669"/>
    <property type="project" value="UniProtKB-EC"/>
</dbReference>
<dbReference type="GO" id="GO:0005524">
    <property type="term" value="F:ATP binding"/>
    <property type="evidence" value="ECO:0007669"/>
    <property type="project" value="UniProtKB-KW"/>
</dbReference>
<dbReference type="GO" id="GO:0016887">
    <property type="term" value="F:ATP hydrolysis activity"/>
    <property type="evidence" value="ECO:0007669"/>
    <property type="project" value="InterPro"/>
</dbReference>
<dbReference type="FunFam" id="3.40.50.300:FF:000425">
    <property type="entry name" value="Probable ABC transporter, ATP-binding subunit"/>
    <property type="match status" value="1"/>
</dbReference>
<dbReference type="Gene3D" id="2.40.50.100">
    <property type="match status" value="1"/>
</dbReference>
<dbReference type="Gene3D" id="3.40.50.300">
    <property type="entry name" value="P-loop containing nucleotide triphosphate hydrolases"/>
    <property type="match status" value="1"/>
</dbReference>
<dbReference type="InterPro" id="IPR003593">
    <property type="entry name" value="AAA+_ATPase"/>
</dbReference>
<dbReference type="InterPro" id="IPR050093">
    <property type="entry name" value="ABC_SmlMolc_Importer"/>
</dbReference>
<dbReference type="InterPro" id="IPR003439">
    <property type="entry name" value="ABC_transporter-like_ATP-bd"/>
</dbReference>
<dbReference type="InterPro" id="IPR017871">
    <property type="entry name" value="ABC_transporter-like_CS"/>
</dbReference>
<dbReference type="InterPro" id="IPR008995">
    <property type="entry name" value="Mo/tungstate-bd_C_term_dom"/>
</dbReference>
<dbReference type="InterPro" id="IPR027417">
    <property type="entry name" value="P-loop_NTPase"/>
</dbReference>
<dbReference type="InterPro" id="IPR013611">
    <property type="entry name" value="Transp-assoc_OB_typ2"/>
</dbReference>
<dbReference type="PANTHER" id="PTHR42781">
    <property type="entry name" value="SPERMIDINE/PUTRESCINE IMPORT ATP-BINDING PROTEIN POTA"/>
    <property type="match status" value="1"/>
</dbReference>
<dbReference type="PANTHER" id="PTHR42781:SF1">
    <property type="entry name" value="THIAMINE IMPORT ATP-BINDING PROTEIN THIQ"/>
    <property type="match status" value="1"/>
</dbReference>
<dbReference type="Pfam" id="PF00005">
    <property type="entry name" value="ABC_tran"/>
    <property type="match status" value="1"/>
</dbReference>
<dbReference type="Pfam" id="PF08402">
    <property type="entry name" value="TOBE_2"/>
    <property type="match status" value="1"/>
</dbReference>
<dbReference type="SMART" id="SM00382">
    <property type="entry name" value="AAA"/>
    <property type="match status" value="1"/>
</dbReference>
<dbReference type="SUPFAM" id="SSF50331">
    <property type="entry name" value="MOP-like"/>
    <property type="match status" value="1"/>
</dbReference>
<dbReference type="SUPFAM" id="SSF52540">
    <property type="entry name" value="P-loop containing nucleoside triphosphate hydrolases"/>
    <property type="match status" value="1"/>
</dbReference>
<dbReference type="PROSITE" id="PS00211">
    <property type="entry name" value="ABC_TRANSPORTER_1"/>
    <property type="match status" value="1"/>
</dbReference>
<dbReference type="PROSITE" id="PS50893">
    <property type="entry name" value="ABC_TRANSPORTER_2"/>
    <property type="match status" value="1"/>
</dbReference>
<dbReference type="PROSITE" id="PS51242">
    <property type="entry name" value="FBPC"/>
    <property type="match status" value="1"/>
</dbReference>
<gene>
    <name evidence="1" type="primary">fbpC</name>
    <name type="ordered locus">BMEII0567</name>
</gene>
<proteinExistence type="inferred from homology"/>
<keyword id="KW-0067">ATP-binding</keyword>
<keyword id="KW-0997">Cell inner membrane</keyword>
<keyword id="KW-1003">Cell membrane</keyword>
<keyword id="KW-0406">Ion transport</keyword>
<keyword id="KW-0408">Iron</keyword>
<keyword id="KW-0410">Iron transport</keyword>
<keyword id="KW-0472">Membrane</keyword>
<keyword id="KW-0547">Nucleotide-binding</keyword>
<keyword id="KW-1278">Translocase</keyword>
<keyword id="KW-0813">Transport</keyword>
<evidence type="ECO:0000255" key="1">
    <source>
        <dbReference type="HAMAP-Rule" id="MF_01706"/>
    </source>
</evidence>
<sequence>MTAIRPGSVTFENVTKKFGNFTALPNLSLTVEPGTLVTLLGLSGCGKTTTLRLLAGLEHPTSGRILIGGKDVTNLPANERDVSMVFQSYALFPHMTSLENVAYGLESSGFKKNEARERAEEGLKLVGLGGMGHRLPAELSGGQQQRVAVARALVLEPQVLLLDEPLSNLDARLRRRVRTEIRELQQRLGFTAVYVTHDQDEALAVSDTIIVMKEGGIAQKGSPRDLYEAPASAFIADFMGEANVVPCEVISAENGEAVIRVAGLTHRVPARNAQPGPAQLAIRPNAVTLQPQAGGGFSGTVAHSAYLGDHIEYEIETEHGKLFIVDPAVEQSLPLQTDVSIQFKTRGLAIINQ</sequence>
<comment type="function">
    <text evidence="1">Part of the ABC transporter complex FbpABC involved in Fe(3+) ions import. Responsible for energy coupling to the transport system.</text>
</comment>
<comment type="catalytic activity">
    <reaction evidence="1">
        <text>Fe(3+)(out) + ATP + H2O = Fe(3+)(in) + ADP + phosphate + H(+)</text>
        <dbReference type="Rhea" id="RHEA:12332"/>
        <dbReference type="ChEBI" id="CHEBI:15377"/>
        <dbReference type="ChEBI" id="CHEBI:15378"/>
        <dbReference type="ChEBI" id="CHEBI:29034"/>
        <dbReference type="ChEBI" id="CHEBI:30616"/>
        <dbReference type="ChEBI" id="CHEBI:43474"/>
        <dbReference type="ChEBI" id="CHEBI:456216"/>
        <dbReference type="EC" id="7.2.2.7"/>
    </reaction>
</comment>
<comment type="subunit">
    <text evidence="1">The complex is composed of two ATP-binding proteins (FbpC), two transmembrane proteins (FbpB) and a solute-binding protein (FbpA).</text>
</comment>
<comment type="subcellular location">
    <subcellularLocation>
        <location evidence="1">Cell inner membrane</location>
        <topology evidence="1">Peripheral membrane protein</topology>
    </subcellularLocation>
</comment>
<comment type="similarity">
    <text evidence="1">Belongs to the ABC transporter superfamily. Fe(3+) ion importer (TC 3.A.1.10) family.</text>
</comment>
<reference key="1">
    <citation type="journal article" date="2002" name="Proc. Natl. Acad. Sci. U.S.A.">
        <title>The genome sequence of the facultative intracellular pathogen Brucella melitensis.</title>
        <authorList>
            <person name="DelVecchio V.G."/>
            <person name="Kapatral V."/>
            <person name="Redkar R.J."/>
            <person name="Patra G."/>
            <person name="Mujer C."/>
            <person name="Los T."/>
            <person name="Ivanova N."/>
            <person name="Anderson I."/>
            <person name="Bhattacharyya A."/>
            <person name="Lykidis A."/>
            <person name="Reznik G."/>
            <person name="Jablonski L."/>
            <person name="Larsen N."/>
            <person name="D'Souza M."/>
            <person name="Bernal A."/>
            <person name="Mazur M."/>
            <person name="Goltsman E."/>
            <person name="Selkov E."/>
            <person name="Elzer P.H."/>
            <person name="Hagius S."/>
            <person name="O'Callaghan D."/>
            <person name="Letesson J.-J."/>
            <person name="Haselkorn R."/>
            <person name="Kyrpides N.C."/>
            <person name="Overbeek R."/>
        </authorList>
    </citation>
    <scope>NUCLEOTIDE SEQUENCE [LARGE SCALE GENOMIC DNA]</scope>
    <source>
        <strain>ATCC 23456 / CCUG 17765 / NCTC 10094 / 16M</strain>
    </source>
</reference>
<accession>Q8YCG3</accession>
<feature type="chain" id="PRO_0000092345" description="Fe(3+) ions import ATP-binding protein FbpC">
    <location>
        <begin position="1"/>
        <end position="353"/>
    </location>
</feature>
<feature type="domain" description="ABC transporter" evidence="1">
    <location>
        <begin position="9"/>
        <end position="239"/>
    </location>
</feature>
<feature type="binding site" evidence="1">
    <location>
        <begin position="41"/>
        <end position="48"/>
    </location>
    <ligand>
        <name>ATP</name>
        <dbReference type="ChEBI" id="CHEBI:30616"/>
    </ligand>
</feature>
<protein>
    <recommendedName>
        <fullName evidence="1">Fe(3+) ions import ATP-binding protein FbpC</fullName>
        <ecNumber evidence="1">7.2.2.7</ecNumber>
    </recommendedName>
</protein>
<name>FBPC_BRUME</name>